<sequence length="13" mass="1448">FLPFLASLLSKVL</sequence>
<comment type="function">
    <text evidence="1">Antibacterial activity against Gram-positive bacterium S.aureus (MIC=80 uM).</text>
</comment>
<comment type="subcellular location">
    <subcellularLocation>
        <location evidence="1">Secreted</location>
    </subcellularLocation>
</comment>
<comment type="tissue specificity">
    <text evidence="4">Expressed by the skin glands.</text>
</comment>
<comment type="mass spectrometry" mass="1447.0" error="0.02" method="Electrospray" evidence="1"/>
<comment type="similarity">
    <text evidence="3">Belongs to the frog skin active peptide (FSAP) family. Temporin subfamily.</text>
</comment>
<dbReference type="GO" id="GO:0005576">
    <property type="term" value="C:extracellular region"/>
    <property type="evidence" value="ECO:0007669"/>
    <property type="project" value="UniProtKB-SubCell"/>
</dbReference>
<dbReference type="GO" id="GO:0042742">
    <property type="term" value="P:defense response to bacterium"/>
    <property type="evidence" value="ECO:0007669"/>
    <property type="project" value="UniProtKB-KW"/>
</dbReference>
<organism>
    <name type="scientific">Lithobates clamitans</name>
    <name type="common">Green frog</name>
    <name type="synonym">Rana clamitans</name>
    <dbReference type="NCBI Taxonomy" id="145282"/>
    <lineage>
        <taxon>Eukaryota</taxon>
        <taxon>Metazoa</taxon>
        <taxon>Chordata</taxon>
        <taxon>Craniata</taxon>
        <taxon>Vertebrata</taxon>
        <taxon>Euteleostomi</taxon>
        <taxon>Amphibia</taxon>
        <taxon>Batrachia</taxon>
        <taxon>Anura</taxon>
        <taxon>Neobatrachia</taxon>
        <taxon>Ranoidea</taxon>
        <taxon>Ranidae</taxon>
        <taxon>Lithobates</taxon>
    </lineage>
</organism>
<reference key="1">
    <citation type="journal article" date="2000" name="Peptides">
        <title>Purification and characterization of antimicrobial peptides from the skin of the North American green frog Rana clamitans.</title>
        <authorList>
            <person name="Halverson T."/>
            <person name="Basir Y.J."/>
            <person name="Knoop F.C."/>
            <person name="Conlon J.M."/>
        </authorList>
    </citation>
    <scope>PROTEIN SEQUENCE</scope>
    <scope>FUNCTION</scope>
    <scope>AMIDATION AT LEU-13</scope>
    <scope>MASS SPECTROMETRY</scope>
    <scope>SUBCELLULAR LOCATION</scope>
    <source>
        <tissue>Skin secretion</tissue>
    </source>
</reference>
<feature type="peptide" id="PRO_0000043573" description="Temporin-1Cd" evidence="1">
    <location>
        <begin position="1"/>
        <end position="13"/>
    </location>
</feature>
<feature type="modified residue" description="Leucine amide" evidence="1">
    <location>
        <position position="13"/>
    </location>
</feature>
<protein>
    <recommendedName>
        <fullName evidence="2">Temporin-1Cd</fullName>
    </recommendedName>
</protein>
<evidence type="ECO:0000269" key="1">
    <source>
    </source>
</evidence>
<evidence type="ECO:0000303" key="2">
    <source>
    </source>
</evidence>
<evidence type="ECO:0000305" key="3"/>
<evidence type="ECO:0000305" key="4">
    <source>
    </source>
</evidence>
<proteinExistence type="evidence at protein level"/>
<accession>P82883</accession>
<name>TP1D_LITCL</name>
<keyword id="KW-0027">Amidation</keyword>
<keyword id="KW-0878">Amphibian defense peptide</keyword>
<keyword id="KW-0044">Antibiotic</keyword>
<keyword id="KW-0929">Antimicrobial</keyword>
<keyword id="KW-0903">Direct protein sequencing</keyword>
<keyword id="KW-0964">Secreted</keyword>